<keyword id="KW-1003">Cell membrane</keyword>
<keyword id="KW-0175">Coiled coil</keyword>
<keyword id="KW-0472">Membrane</keyword>
<keyword id="KW-1185">Reference proteome</keyword>
<keyword id="KW-0812">Transmembrane</keyword>
<keyword id="KW-1133">Transmembrane helix</keyword>
<evidence type="ECO:0000255" key="1"/>
<evidence type="ECO:0000305" key="2"/>
<name>YVRP_BACSU</name>
<gene>
    <name type="primary">yvrP</name>
    <name type="ordered locus">BSU33280</name>
</gene>
<accession>O35007</accession>
<accession>Q7B2K6</accession>
<proteinExistence type="inferred from homology"/>
<feature type="chain" id="PRO_0000376840" description="Putative efflux system protein YvrP">
    <location>
        <begin position="1"/>
        <end position="397"/>
    </location>
</feature>
<feature type="transmembrane region" description="Helical" evidence="1">
    <location>
        <begin position="8"/>
        <end position="28"/>
    </location>
</feature>
<feature type="coiled-coil region" evidence="1">
    <location>
        <begin position="106"/>
        <end position="183"/>
    </location>
</feature>
<reference key="1">
    <citation type="journal article" date="1998" name="Microbiology">
        <title>The yvsA-yvqA (293 degrees - 289 degrees) region of the Bacillus subtilis chromosome containing genes involved in metal ion uptake and a putative sigma factor.</title>
        <authorList>
            <person name="Wipat A."/>
            <person name="Brignell C.S."/>
            <person name="Guy J.B."/>
            <person name="Rose M."/>
            <person name="Emmerson P.T."/>
            <person name="Harwood C.R."/>
        </authorList>
    </citation>
    <scope>NUCLEOTIDE SEQUENCE [GENOMIC DNA]</scope>
    <source>
        <strain>168</strain>
    </source>
</reference>
<reference key="2">
    <citation type="journal article" date="1997" name="Nature">
        <title>The complete genome sequence of the Gram-positive bacterium Bacillus subtilis.</title>
        <authorList>
            <person name="Kunst F."/>
            <person name="Ogasawara N."/>
            <person name="Moszer I."/>
            <person name="Albertini A.M."/>
            <person name="Alloni G."/>
            <person name="Azevedo V."/>
            <person name="Bertero M.G."/>
            <person name="Bessieres P."/>
            <person name="Bolotin A."/>
            <person name="Borchert S."/>
            <person name="Borriss R."/>
            <person name="Boursier L."/>
            <person name="Brans A."/>
            <person name="Braun M."/>
            <person name="Brignell S.C."/>
            <person name="Bron S."/>
            <person name="Brouillet S."/>
            <person name="Bruschi C.V."/>
            <person name="Caldwell B."/>
            <person name="Capuano V."/>
            <person name="Carter N.M."/>
            <person name="Choi S.-K."/>
            <person name="Codani J.-J."/>
            <person name="Connerton I.F."/>
            <person name="Cummings N.J."/>
            <person name="Daniel R.A."/>
            <person name="Denizot F."/>
            <person name="Devine K.M."/>
            <person name="Duesterhoeft A."/>
            <person name="Ehrlich S.D."/>
            <person name="Emmerson P.T."/>
            <person name="Entian K.-D."/>
            <person name="Errington J."/>
            <person name="Fabret C."/>
            <person name="Ferrari E."/>
            <person name="Foulger D."/>
            <person name="Fritz C."/>
            <person name="Fujita M."/>
            <person name="Fujita Y."/>
            <person name="Fuma S."/>
            <person name="Galizzi A."/>
            <person name="Galleron N."/>
            <person name="Ghim S.-Y."/>
            <person name="Glaser P."/>
            <person name="Goffeau A."/>
            <person name="Golightly E.J."/>
            <person name="Grandi G."/>
            <person name="Guiseppi G."/>
            <person name="Guy B.J."/>
            <person name="Haga K."/>
            <person name="Haiech J."/>
            <person name="Harwood C.R."/>
            <person name="Henaut A."/>
            <person name="Hilbert H."/>
            <person name="Holsappel S."/>
            <person name="Hosono S."/>
            <person name="Hullo M.-F."/>
            <person name="Itaya M."/>
            <person name="Jones L.-M."/>
            <person name="Joris B."/>
            <person name="Karamata D."/>
            <person name="Kasahara Y."/>
            <person name="Klaerr-Blanchard M."/>
            <person name="Klein C."/>
            <person name="Kobayashi Y."/>
            <person name="Koetter P."/>
            <person name="Koningstein G."/>
            <person name="Krogh S."/>
            <person name="Kumano M."/>
            <person name="Kurita K."/>
            <person name="Lapidus A."/>
            <person name="Lardinois S."/>
            <person name="Lauber J."/>
            <person name="Lazarevic V."/>
            <person name="Lee S.-M."/>
            <person name="Levine A."/>
            <person name="Liu H."/>
            <person name="Masuda S."/>
            <person name="Mauel C."/>
            <person name="Medigue C."/>
            <person name="Medina N."/>
            <person name="Mellado R.P."/>
            <person name="Mizuno M."/>
            <person name="Moestl D."/>
            <person name="Nakai S."/>
            <person name="Noback M."/>
            <person name="Noone D."/>
            <person name="O'Reilly M."/>
            <person name="Ogawa K."/>
            <person name="Ogiwara A."/>
            <person name="Oudega B."/>
            <person name="Park S.-H."/>
            <person name="Parro V."/>
            <person name="Pohl T.M."/>
            <person name="Portetelle D."/>
            <person name="Porwollik S."/>
            <person name="Prescott A.M."/>
            <person name="Presecan E."/>
            <person name="Pujic P."/>
            <person name="Purnelle B."/>
            <person name="Rapoport G."/>
            <person name="Rey M."/>
            <person name="Reynolds S."/>
            <person name="Rieger M."/>
            <person name="Rivolta C."/>
            <person name="Rocha E."/>
            <person name="Roche B."/>
            <person name="Rose M."/>
            <person name="Sadaie Y."/>
            <person name="Sato T."/>
            <person name="Scanlan E."/>
            <person name="Schleich S."/>
            <person name="Schroeter R."/>
            <person name="Scoffone F."/>
            <person name="Sekiguchi J."/>
            <person name="Sekowska A."/>
            <person name="Seror S.J."/>
            <person name="Serror P."/>
            <person name="Shin B.-S."/>
            <person name="Soldo B."/>
            <person name="Sorokin A."/>
            <person name="Tacconi E."/>
            <person name="Takagi T."/>
            <person name="Takahashi H."/>
            <person name="Takemaru K."/>
            <person name="Takeuchi M."/>
            <person name="Tamakoshi A."/>
            <person name="Tanaka T."/>
            <person name="Terpstra P."/>
            <person name="Tognoni A."/>
            <person name="Tosato V."/>
            <person name="Uchiyama S."/>
            <person name="Vandenbol M."/>
            <person name="Vannier F."/>
            <person name="Vassarotti A."/>
            <person name="Viari A."/>
            <person name="Wambutt R."/>
            <person name="Wedler E."/>
            <person name="Wedler H."/>
            <person name="Weitzenegger T."/>
            <person name="Winters P."/>
            <person name="Wipat A."/>
            <person name="Yamamoto H."/>
            <person name="Yamane K."/>
            <person name="Yasumoto K."/>
            <person name="Yata K."/>
            <person name="Yoshida K."/>
            <person name="Yoshikawa H.-F."/>
            <person name="Zumstein E."/>
            <person name="Yoshikawa H."/>
            <person name="Danchin A."/>
        </authorList>
    </citation>
    <scope>NUCLEOTIDE SEQUENCE [LARGE SCALE GENOMIC DNA]</scope>
    <source>
        <strain>168</strain>
    </source>
</reference>
<organism>
    <name type="scientific">Bacillus subtilis (strain 168)</name>
    <dbReference type="NCBI Taxonomy" id="224308"/>
    <lineage>
        <taxon>Bacteria</taxon>
        <taxon>Bacillati</taxon>
        <taxon>Bacillota</taxon>
        <taxon>Bacilli</taxon>
        <taxon>Bacillales</taxon>
        <taxon>Bacillaceae</taxon>
        <taxon>Bacillus</taxon>
    </lineage>
</organism>
<comment type="subcellular location">
    <subcellularLocation>
        <location evidence="2">Cell membrane</location>
        <topology evidence="2">Single-pass membrane protein</topology>
    </subcellularLocation>
</comment>
<comment type="similarity">
    <text evidence="2">Belongs to the membrane fusion protein (MFP) (TC 8.A.1) family.</text>
</comment>
<sequence length="397" mass="43493">MSKKKKWLIGGAICAGVLVLAGIGAGGFYFFTHMNQVAVSSEPYAESVAVYMGGDSESGQTFSGKVEPEKQQKVYIDSEKGSIKKTYVKEGDQVKKGDKLFEYEGEDHSDEVEQANLQIEMTNLQINRLQKSITETEKKLKVAGKEEKNQLQDELDQTNFDLKTSQLELKQHQKELAGLTKNKGSNVITSKHDGIVQSVNQDIADGATGDQAAGPYIQIVSTGKYLVKSQINELLMDTIKKGSKVRVTLKTGGEGEWKGKVTSIGKLPAGAGEGEESESFADEEMNPQSSNYPFTILLDSHKGLEVGYHVNIEVMSDNADADTIKLPSDMVIQDDGEPYVWKADENHKAVKQPVEIGETDENDMVEIKSGLTPEDYVIYPDPAVKEGKQVTVNADTE</sequence>
<protein>
    <recommendedName>
        <fullName>Putative efflux system protein YvrP</fullName>
    </recommendedName>
</protein>
<dbReference type="EMBL" id="AJ223978">
    <property type="protein sequence ID" value="CAA11723.1"/>
    <property type="molecule type" value="Genomic_DNA"/>
</dbReference>
<dbReference type="EMBL" id="AL009126">
    <property type="protein sequence ID" value="CAB15319.1"/>
    <property type="molecule type" value="Genomic_DNA"/>
</dbReference>
<dbReference type="PIR" id="B70048">
    <property type="entry name" value="B70048"/>
</dbReference>
<dbReference type="RefSeq" id="NP_391209.1">
    <property type="nucleotide sequence ID" value="NC_000964.3"/>
</dbReference>
<dbReference type="RefSeq" id="WP_003243035.1">
    <property type="nucleotide sequence ID" value="NZ_OZ025638.1"/>
</dbReference>
<dbReference type="SMR" id="O35007"/>
<dbReference type="FunCoup" id="O35007">
    <property type="interactions" value="74"/>
</dbReference>
<dbReference type="STRING" id="224308.BSU33280"/>
<dbReference type="PaxDb" id="224308-BSU33280"/>
<dbReference type="DNASU" id="938618"/>
<dbReference type="EnsemblBacteria" id="CAB15319">
    <property type="protein sequence ID" value="CAB15319"/>
    <property type="gene ID" value="BSU_33280"/>
</dbReference>
<dbReference type="GeneID" id="938618"/>
<dbReference type="KEGG" id="bsu:BSU33280"/>
<dbReference type="PATRIC" id="fig|224308.179.peg.3612"/>
<dbReference type="eggNOG" id="COG0845">
    <property type="taxonomic scope" value="Bacteria"/>
</dbReference>
<dbReference type="InParanoid" id="O35007"/>
<dbReference type="OrthoDB" id="85226at2"/>
<dbReference type="PhylomeDB" id="O35007"/>
<dbReference type="BioCyc" id="BSUB:BSU33280-MONOMER"/>
<dbReference type="Proteomes" id="UP000001570">
    <property type="component" value="Chromosome"/>
</dbReference>
<dbReference type="GO" id="GO:0005886">
    <property type="term" value="C:plasma membrane"/>
    <property type="evidence" value="ECO:0007669"/>
    <property type="project" value="UniProtKB-SubCell"/>
</dbReference>
<dbReference type="Gene3D" id="2.40.30.170">
    <property type="match status" value="1"/>
</dbReference>
<dbReference type="Gene3D" id="2.40.420.20">
    <property type="match status" value="1"/>
</dbReference>
<dbReference type="Gene3D" id="2.40.50.100">
    <property type="match status" value="1"/>
</dbReference>
<dbReference type="InterPro" id="IPR032317">
    <property type="entry name" value="CusB_D23"/>
</dbReference>
<dbReference type="InterPro" id="IPR050465">
    <property type="entry name" value="UPF0194_transport"/>
</dbReference>
<dbReference type="PANTHER" id="PTHR32347">
    <property type="entry name" value="EFFLUX SYSTEM COMPONENT YKNX-RELATED"/>
    <property type="match status" value="1"/>
</dbReference>
<dbReference type="PANTHER" id="PTHR32347:SF14">
    <property type="entry name" value="EFFLUX SYSTEM COMPONENT YKNX-RELATED"/>
    <property type="match status" value="1"/>
</dbReference>
<dbReference type="Pfam" id="PF16576">
    <property type="entry name" value="HlyD_D23"/>
    <property type="match status" value="1"/>
</dbReference>
<dbReference type="SUPFAM" id="SSF111369">
    <property type="entry name" value="HlyD-like secretion proteins"/>
    <property type="match status" value="1"/>
</dbReference>